<reference key="1">
    <citation type="journal article" date="1996" name="Microbiology">
        <title>Systematic sequencing of the 283 kb 210 degrees-232 degrees region of the Bacillus subtilis genome containing the skin element and many sporulation genes.</title>
        <authorList>
            <person name="Mizuno M."/>
            <person name="Masuda S."/>
            <person name="Takemaru K."/>
            <person name="Hosono S."/>
            <person name="Sato T."/>
            <person name="Takeuchi M."/>
            <person name="Kobayashi Y."/>
        </authorList>
    </citation>
    <scope>NUCLEOTIDE SEQUENCE [GENOMIC DNA]</scope>
    <source>
        <strain>168 / JH642</strain>
    </source>
</reference>
<reference key="2">
    <citation type="journal article" date="1997" name="Nature">
        <title>The complete genome sequence of the Gram-positive bacterium Bacillus subtilis.</title>
        <authorList>
            <person name="Kunst F."/>
            <person name="Ogasawara N."/>
            <person name="Moszer I."/>
            <person name="Albertini A.M."/>
            <person name="Alloni G."/>
            <person name="Azevedo V."/>
            <person name="Bertero M.G."/>
            <person name="Bessieres P."/>
            <person name="Bolotin A."/>
            <person name="Borchert S."/>
            <person name="Borriss R."/>
            <person name="Boursier L."/>
            <person name="Brans A."/>
            <person name="Braun M."/>
            <person name="Brignell S.C."/>
            <person name="Bron S."/>
            <person name="Brouillet S."/>
            <person name="Bruschi C.V."/>
            <person name="Caldwell B."/>
            <person name="Capuano V."/>
            <person name="Carter N.M."/>
            <person name="Choi S.-K."/>
            <person name="Codani J.-J."/>
            <person name="Connerton I.F."/>
            <person name="Cummings N.J."/>
            <person name="Daniel R.A."/>
            <person name="Denizot F."/>
            <person name="Devine K.M."/>
            <person name="Duesterhoeft A."/>
            <person name="Ehrlich S.D."/>
            <person name="Emmerson P.T."/>
            <person name="Entian K.-D."/>
            <person name="Errington J."/>
            <person name="Fabret C."/>
            <person name="Ferrari E."/>
            <person name="Foulger D."/>
            <person name="Fritz C."/>
            <person name="Fujita M."/>
            <person name="Fujita Y."/>
            <person name="Fuma S."/>
            <person name="Galizzi A."/>
            <person name="Galleron N."/>
            <person name="Ghim S.-Y."/>
            <person name="Glaser P."/>
            <person name="Goffeau A."/>
            <person name="Golightly E.J."/>
            <person name="Grandi G."/>
            <person name="Guiseppi G."/>
            <person name="Guy B.J."/>
            <person name="Haga K."/>
            <person name="Haiech J."/>
            <person name="Harwood C.R."/>
            <person name="Henaut A."/>
            <person name="Hilbert H."/>
            <person name="Holsappel S."/>
            <person name="Hosono S."/>
            <person name="Hullo M.-F."/>
            <person name="Itaya M."/>
            <person name="Jones L.-M."/>
            <person name="Joris B."/>
            <person name="Karamata D."/>
            <person name="Kasahara Y."/>
            <person name="Klaerr-Blanchard M."/>
            <person name="Klein C."/>
            <person name="Kobayashi Y."/>
            <person name="Koetter P."/>
            <person name="Koningstein G."/>
            <person name="Krogh S."/>
            <person name="Kumano M."/>
            <person name="Kurita K."/>
            <person name="Lapidus A."/>
            <person name="Lardinois S."/>
            <person name="Lauber J."/>
            <person name="Lazarevic V."/>
            <person name="Lee S.-M."/>
            <person name="Levine A."/>
            <person name="Liu H."/>
            <person name="Masuda S."/>
            <person name="Mauel C."/>
            <person name="Medigue C."/>
            <person name="Medina N."/>
            <person name="Mellado R.P."/>
            <person name="Mizuno M."/>
            <person name="Moestl D."/>
            <person name="Nakai S."/>
            <person name="Noback M."/>
            <person name="Noone D."/>
            <person name="O'Reilly M."/>
            <person name="Ogawa K."/>
            <person name="Ogiwara A."/>
            <person name="Oudega B."/>
            <person name="Park S.-H."/>
            <person name="Parro V."/>
            <person name="Pohl T.M."/>
            <person name="Portetelle D."/>
            <person name="Porwollik S."/>
            <person name="Prescott A.M."/>
            <person name="Presecan E."/>
            <person name="Pujic P."/>
            <person name="Purnelle B."/>
            <person name="Rapoport G."/>
            <person name="Rey M."/>
            <person name="Reynolds S."/>
            <person name="Rieger M."/>
            <person name="Rivolta C."/>
            <person name="Rocha E."/>
            <person name="Roche B."/>
            <person name="Rose M."/>
            <person name="Sadaie Y."/>
            <person name="Sato T."/>
            <person name="Scanlan E."/>
            <person name="Schleich S."/>
            <person name="Schroeter R."/>
            <person name="Scoffone F."/>
            <person name="Sekiguchi J."/>
            <person name="Sekowska A."/>
            <person name="Seror S.J."/>
            <person name="Serror P."/>
            <person name="Shin B.-S."/>
            <person name="Soldo B."/>
            <person name="Sorokin A."/>
            <person name="Tacconi E."/>
            <person name="Takagi T."/>
            <person name="Takahashi H."/>
            <person name="Takemaru K."/>
            <person name="Takeuchi M."/>
            <person name="Tamakoshi A."/>
            <person name="Tanaka T."/>
            <person name="Terpstra P."/>
            <person name="Tognoni A."/>
            <person name="Tosato V."/>
            <person name="Uchiyama S."/>
            <person name="Vandenbol M."/>
            <person name="Vannier F."/>
            <person name="Vassarotti A."/>
            <person name="Viari A."/>
            <person name="Wambutt R."/>
            <person name="Wedler E."/>
            <person name="Wedler H."/>
            <person name="Weitzenegger T."/>
            <person name="Winters P."/>
            <person name="Wipat A."/>
            <person name="Yamamoto H."/>
            <person name="Yamane K."/>
            <person name="Yasumoto K."/>
            <person name="Yata K."/>
            <person name="Yoshida K."/>
            <person name="Yoshikawa H.-F."/>
            <person name="Zumstein E."/>
            <person name="Yoshikawa H."/>
            <person name="Danchin A."/>
        </authorList>
    </citation>
    <scope>NUCLEOTIDE SEQUENCE [LARGE SCALE GENOMIC DNA]</scope>
    <source>
        <strain>168</strain>
    </source>
</reference>
<organism>
    <name type="scientific">Bacillus subtilis (strain 168)</name>
    <dbReference type="NCBI Taxonomy" id="224308"/>
    <lineage>
        <taxon>Bacteria</taxon>
        <taxon>Bacillati</taxon>
        <taxon>Bacillota</taxon>
        <taxon>Bacilli</taxon>
        <taxon>Bacillales</taxon>
        <taxon>Bacillaceae</taxon>
        <taxon>Bacillus</taxon>
    </lineage>
</organism>
<accession>P54497</accession>
<gene>
    <name type="primary">yqgT</name>
    <name type="ordered locus">BSU24830</name>
</gene>
<dbReference type="EMBL" id="D84432">
    <property type="protein sequence ID" value="BAA12523.1"/>
    <property type="molecule type" value="Genomic_DNA"/>
</dbReference>
<dbReference type="EMBL" id="AL009126">
    <property type="protein sequence ID" value="CAB14414.1"/>
    <property type="molecule type" value="Genomic_DNA"/>
</dbReference>
<dbReference type="PIR" id="E69957">
    <property type="entry name" value="E69957"/>
</dbReference>
<dbReference type="RefSeq" id="NP_390363.1">
    <property type="nucleotide sequence ID" value="NC_000964.3"/>
</dbReference>
<dbReference type="RefSeq" id="WP_010886566.1">
    <property type="nucleotide sequence ID" value="NZ_OZ025638.1"/>
</dbReference>
<dbReference type="SMR" id="P54497"/>
<dbReference type="FunCoup" id="P54497">
    <property type="interactions" value="3"/>
</dbReference>
<dbReference type="STRING" id="224308.BSU24830"/>
<dbReference type="PaxDb" id="224308-BSU24830"/>
<dbReference type="EnsemblBacteria" id="CAB14414">
    <property type="protein sequence ID" value="CAB14414"/>
    <property type="gene ID" value="BSU_24830"/>
</dbReference>
<dbReference type="GeneID" id="938214"/>
<dbReference type="KEGG" id="bsu:BSU24830"/>
<dbReference type="PATRIC" id="fig|224308.43.peg.2590"/>
<dbReference type="eggNOG" id="COG2866">
    <property type="taxonomic scope" value="Bacteria"/>
</dbReference>
<dbReference type="InParanoid" id="P54497"/>
<dbReference type="OrthoDB" id="9802862at2"/>
<dbReference type="BioCyc" id="BSUB:BSU24830-MONOMER"/>
<dbReference type="Proteomes" id="UP000001570">
    <property type="component" value="Chromosome"/>
</dbReference>
<dbReference type="GO" id="GO:0005615">
    <property type="term" value="C:extracellular space"/>
    <property type="evidence" value="ECO:0000318"/>
    <property type="project" value="GO_Central"/>
</dbReference>
<dbReference type="GO" id="GO:0004181">
    <property type="term" value="F:metallocarboxypeptidase activity"/>
    <property type="evidence" value="ECO:0000318"/>
    <property type="project" value="GO_Central"/>
</dbReference>
<dbReference type="GO" id="GO:0008270">
    <property type="term" value="F:zinc ion binding"/>
    <property type="evidence" value="ECO:0007669"/>
    <property type="project" value="InterPro"/>
</dbReference>
<dbReference type="GO" id="GO:0006508">
    <property type="term" value="P:proteolysis"/>
    <property type="evidence" value="ECO:0000318"/>
    <property type="project" value="GO_Central"/>
</dbReference>
<dbReference type="CDD" id="cd06229">
    <property type="entry name" value="M14_Endopeptidase_I"/>
    <property type="match status" value="1"/>
</dbReference>
<dbReference type="FunFam" id="3.40.630.10:FF:000269">
    <property type="entry name" value="Uncharacterized protein YqgT"/>
    <property type="match status" value="1"/>
</dbReference>
<dbReference type="Gene3D" id="3.40.630.10">
    <property type="entry name" value="Zn peptidases"/>
    <property type="match status" value="1"/>
</dbReference>
<dbReference type="InterPro" id="IPR034274">
    <property type="entry name" value="ENP1_M14_CPD"/>
</dbReference>
<dbReference type="InterPro" id="IPR000834">
    <property type="entry name" value="Peptidase_M14"/>
</dbReference>
<dbReference type="PANTHER" id="PTHR11705">
    <property type="entry name" value="PROTEASE FAMILY M14 CARBOXYPEPTIDASE A,B"/>
    <property type="match status" value="1"/>
</dbReference>
<dbReference type="PANTHER" id="PTHR11705:SF143">
    <property type="entry name" value="SLL0236 PROTEIN"/>
    <property type="match status" value="1"/>
</dbReference>
<dbReference type="Pfam" id="PF00246">
    <property type="entry name" value="Peptidase_M14"/>
    <property type="match status" value="1"/>
</dbReference>
<dbReference type="PRINTS" id="PR00765">
    <property type="entry name" value="CRBOXYPTASEA"/>
</dbReference>
<dbReference type="SMART" id="SM00631">
    <property type="entry name" value="Zn_pept"/>
    <property type="match status" value="1"/>
</dbReference>
<dbReference type="SUPFAM" id="SSF53187">
    <property type="entry name" value="Zn-dependent exopeptidases"/>
    <property type="match status" value="1"/>
</dbReference>
<dbReference type="PROSITE" id="PS52035">
    <property type="entry name" value="PEPTIDASE_M14"/>
    <property type="match status" value="1"/>
</dbReference>
<protein>
    <recommendedName>
        <fullName>Uncharacterized protein YqgT</fullName>
    </recommendedName>
</protein>
<name>YQGT_BACSU</name>
<feature type="chain" id="PRO_0000212789" description="Uncharacterized protein YqgT">
    <location>
        <begin position="1"/>
        <end position="376"/>
    </location>
</feature>
<feature type="domain" description="Peptidase M14" evidence="1">
    <location>
        <begin position="82"/>
        <end position="372"/>
    </location>
</feature>
<feature type="active site" description="Proton donor/acceptor" evidence="1">
    <location>
        <position position="344"/>
    </location>
</feature>
<feature type="binding site" evidence="1">
    <location>
        <position position="138"/>
    </location>
    <ligand>
        <name>Zn(2+)</name>
        <dbReference type="ChEBI" id="CHEBI:29105"/>
        <note>catalytic</note>
    </ligand>
</feature>
<feature type="binding site" evidence="1">
    <location>
        <position position="141"/>
    </location>
    <ligand>
        <name>Zn(2+)</name>
        <dbReference type="ChEBI" id="CHEBI:29105"/>
        <note>catalytic</note>
    </ligand>
</feature>
<feature type="binding site" evidence="1">
    <location>
        <position position="283"/>
    </location>
    <ligand>
        <name>Zn(2+)</name>
        <dbReference type="ChEBI" id="CHEBI:29105"/>
        <note>catalytic</note>
    </ligand>
</feature>
<keyword id="KW-0378">Hydrolase</keyword>
<keyword id="KW-0482">Metalloprotease</keyword>
<keyword id="KW-0645">Protease</keyword>
<keyword id="KW-1185">Reference proteome</keyword>
<keyword id="KW-0862">Zinc</keyword>
<evidence type="ECO:0000255" key="1">
    <source>
        <dbReference type="PROSITE-ProRule" id="PRU01379"/>
    </source>
</evidence>
<evidence type="ECO:0000305" key="2"/>
<proteinExistence type="inferred from homology"/>
<sequence>MMAFITVKPEIKNNLANVAKELKIDEELLKSANRSAQKHQLYCPGYVIEEHSGKELQTIQDIKRFLQPRQLKLSDSWIEQEKIYDDSAVEKEIKKIIDVFPFVSCREIGRSVLGRPIWELKAGGEHAVKKVHMNASFHANEWITTSVLLKWFKEYCMSLCCNSPFFGFSPIKLFNSTSLSLVPLVNPDGVDLVLNGSEVMGARRDELERLNEHRPNFNEWKANINGVDLNKQFPSLWEIEKYRKPTAPSYRDFPGISPLTEPESIAMYRLITENPPDRLLALHTQGEEIYWGYKGLEPEESAAVIKEFEELSGNIYKGVRDIDSYAGFRDWFIHHYFKEGYTVELGKGQNPLPFQQFSHIYNATSGILWRALFFHE</sequence>
<comment type="cofactor">
    <cofactor evidence="1">
        <name>Zn(2+)</name>
        <dbReference type="ChEBI" id="CHEBI:29105"/>
    </cofactor>
</comment>
<comment type="similarity">
    <text evidence="2">Belongs to the peptidase M14 family.</text>
</comment>